<gene>
    <name evidence="1" type="primary">fusA</name>
    <name type="ordered locus">SPG_0256</name>
</gene>
<reference key="1">
    <citation type="journal article" date="2001" name="Microb. Drug Resist.">
        <title>Annotated draft genomic sequence from a Streptococcus pneumoniae type 19F clinical isolate.</title>
        <authorList>
            <person name="Dopazo J."/>
            <person name="Mendoza A."/>
            <person name="Herrero J."/>
            <person name="Caldara F."/>
            <person name="Humbert Y."/>
            <person name="Friedli L."/>
            <person name="Guerrier M."/>
            <person name="Grand-Schenk E."/>
            <person name="Gandin C."/>
            <person name="de Francesco M."/>
            <person name="Polissi A."/>
            <person name="Buell G."/>
            <person name="Feger G."/>
            <person name="Garcia E."/>
            <person name="Peitsch M."/>
            <person name="Garcia-Bustos J.F."/>
        </authorList>
    </citation>
    <scope>NUCLEOTIDE SEQUENCE [LARGE SCALE GENOMIC DNA]</scope>
    <source>
        <strain>G54</strain>
    </source>
</reference>
<reference key="2">
    <citation type="submission" date="2008-03" db="EMBL/GenBank/DDBJ databases">
        <title>Pneumococcal beta glucoside metabolism investigated by whole genome comparison.</title>
        <authorList>
            <person name="Mulas L."/>
            <person name="Trappetti C."/>
            <person name="Hakenbeck R."/>
            <person name="Iannelli F."/>
            <person name="Pozzi G."/>
            <person name="Davidsen T.M."/>
            <person name="Tettelin H."/>
            <person name="Oggioni M."/>
        </authorList>
    </citation>
    <scope>NUCLEOTIDE SEQUENCE [LARGE SCALE GENOMIC DNA]</scope>
    <source>
        <strain>G54</strain>
    </source>
</reference>
<protein>
    <recommendedName>
        <fullName evidence="1">Elongation factor G</fullName>
        <shortName evidence="1">EF-G</shortName>
    </recommendedName>
</protein>
<evidence type="ECO:0000255" key="1">
    <source>
        <dbReference type="HAMAP-Rule" id="MF_00054"/>
    </source>
</evidence>
<comment type="function">
    <text evidence="1">Catalyzes the GTP-dependent ribosomal translocation step during translation elongation. During this step, the ribosome changes from the pre-translocational (PRE) to the post-translocational (POST) state as the newly formed A-site-bound peptidyl-tRNA and P-site-bound deacylated tRNA move to the P and E sites, respectively. Catalyzes the coordinated movement of the two tRNA molecules, the mRNA and conformational changes in the ribosome.</text>
</comment>
<comment type="subcellular location">
    <subcellularLocation>
        <location evidence="1">Cytoplasm</location>
    </subcellularLocation>
</comment>
<comment type="similarity">
    <text evidence="1">Belongs to the TRAFAC class translation factor GTPase superfamily. Classic translation factor GTPase family. EF-G/EF-2 subfamily.</text>
</comment>
<name>EFG_STRP4</name>
<organism>
    <name type="scientific">Streptococcus pneumoniae serotype 19F (strain G54)</name>
    <dbReference type="NCBI Taxonomy" id="512566"/>
    <lineage>
        <taxon>Bacteria</taxon>
        <taxon>Bacillati</taxon>
        <taxon>Bacillota</taxon>
        <taxon>Bacilli</taxon>
        <taxon>Lactobacillales</taxon>
        <taxon>Streptococcaceae</taxon>
        <taxon>Streptococcus</taxon>
    </lineage>
</organism>
<accession>B5E6U5</accession>
<sequence>MAREFSLEKTRNIGIMAHVDAGKTTTTERILYYTGKIHKIGETHEGASQMDWMEQEQERGITITSAATTAQWNNHRVNIIDTPGHVDFTIEVQRSLRVLDGAVTVLDSQSGVEPQTETVWRQATEYGVPRIVFANKMDKIGADFLYSVSTLHDRLQANAHPIQLPIGSEDDFRGIIDLIKMKAEIYTNDLGTDILEEDIPAEYLDQAQEYREKLIEAVAETDEELMMKYLEGEEITNEELKAGIRKATINVEFFPVLCGSAFKNKGVQLMLDAVIDYLPSPLDIPAIKGINPDTDAEEIRPASDEEPFAALAFKIMTDPFVGRLTFFRVYSGVLQSGSYVLNTSKGKRERIGRILQMHANSRQEIDTVYSGDIAAAVGLKDTTTGDSLTDEKAKIILESINVPEPVIQLMVEPKSKADQDKMGIALQKLAEEDPTFRVETNVETGETVISGMGELHLDVLVDRMRREFKVEANVGAPQVSYRETFRASTQARGFFKRQSGGKGQFGDVWIEFTPNEEGKGFEFENAIVGGVVPREFIPAVEKGLVESMANGVLAGYPMVDVKAKLYDGSYHDVDSSETAFKIAASLSLKEAAKSAQPAILEPMMLVTITVPEENLGDVMGHVTARRGRVDGMEAHGNSQIVRAYVPLAEMFGYATVLRSASQGRGTFMMVFDHYEDVPKSVQEEIIKKNKGED</sequence>
<keyword id="KW-0963">Cytoplasm</keyword>
<keyword id="KW-0251">Elongation factor</keyword>
<keyword id="KW-0342">GTP-binding</keyword>
<keyword id="KW-0547">Nucleotide-binding</keyword>
<keyword id="KW-0648">Protein biosynthesis</keyword>
<dbReference type="EMBL" id="CP001015">
    <property type="protein sequence ID" value="ACF56720.1"/>
    <property type="molecule type" value="Genomic_DNA"/>
</dbReference>
<dbReference type="SMR" id="B5E6U5"/>
<dbReference type="KEGG" id="spx:SPG_0256"/>
<dbReference type="HOGENOM" id="CLU_002794_4_1_9"/>
<dbReference type="GO" id="GO:0005737">
    <property type="term" value="C:cytoplasm"/>
    <property type="evidence" value="ECO:0007669"/>
    <property type="project" value="UniProtKB-SubCell"/>
</dbReference>
<dbReference type="GO" id="GO:0005525">
    <property type="term" value="F:GTP binding"/>
    <property type="evidence" value="ECO:0007669"/>
    <property type="project" value="UniProtKB-UniRule"/>
</dbReference>
<dbReference type="GO" id="GO:0003924">
    <property type="term" value="F:GTPase activity"/>
    <property type="evidence" value="ECO:0007669"/>
    <property type="project" value="InterPro"/>
</dbReference>
<dbReference type="GO" id="GO:0003746">
    <property type="term" value="F:translation elongation factor activity"/>
    <property type="evidence" value="ECO:0007669"/>
    <property type="project" value="UniProtKB-UniRule"/>
</dbReference>
<dbReference type="GO" id="GO:0032790">
    <property type="term" value="P:ribosome disassembly"/>
    <property type="evidence" value="ECO:0007669"/>
    <property type="project" value="TreeGrafter"/>
</dbReference>
<dbReference type="CDD" id="cd01886">
    <property type="entry name" value="EF-G"/>
    <property type="match status" value="1"/>
</dbReference>
<dbReference type="CDD" id="cd16262">
    <property type="entry name" value="EFG_III"/>
    <property type="match status" value="1"/>
</dbReference>
<dbReference type="CDD" id="cd01434">
    <property type="entry name" value="EFG_mtEFG1_IV"/>
    <property type="match status" value="1"/>
</dbReference>
<dbReference type="CDD" id="cd03713">
    <property type="entry name" value="EFG_mtEFG_C"/>
    <property type="match status" value="1"/>
</dbReference>
<dbReference type="CDD" id="cd04088">
    <property type="entry name" value="EFG_mtEFG_II"/>
    <property type="match status" value="1"/>
</dbReference>
<dbReference type="FunFam" id="2.40.30.10:FF:000006">
    <property type="entry name" value="Elongation factor G"/>
    <property type="match status" value="1"/>
</dbReference>
<dbReference type="FunFam" id="3.30.230.10:FF:000003">
    <property type="entry name" value="Elongation factor G"/>
    <property type="match status" value="1"/>
</dbReference>
<dbReference type="FunFam" id="3.30.70.240:FF:000001">
    <property type="entry name" value="Elongation factor G"/>
    <property type="match status" value="1"/>
</dbReference>
<dbReference type="FunFam" id="3.30.70.870:FF:000001">
    <property type="entry name" value="Elongation factor G"/>
    <property type="match status" value="1"/>
</dbReference>
<dbReference type="FunFam" id="3.40.50.300:FF:000029">
    <property type="entry name" value="Elongation factor G"/>
    <property type="match status" value="1"/>
</dbReference>
<dbReference type="Gene3D" id="3.30.230.10">
    <property type="match status" value="1"/>
</dbReference>
<dbReference type="Gene3D" id="3.30.70.240">
    <property type="match status" value="1"/>
</dbReference>
<dbReference type="Gene3D" id="3.30.70.870">
    <property type="entry name" value="Elongation Factor G (Translational Gtpase), domain 3"/>
    <property type="match status" value="1"/>
</dbReference>
<dbReference type="Gene3D" id="3.40.50.300">
    <property type="entry name" value="P-loop containing nucleotide triphosphate hydrolases"/>
    <property type="match status" value="1"/>
</dbReference>
<dbReference type="Gene3D" id="2.40.30.10">
    <property type="entry name" value="Translation factors"/>
    <property type="match status" value="1"/>
</dbReference>
<dbReference type="HAMAP" id="MF_00054_B">
    <property type="entry name" value="EF_G_EF_2_B"/>
    <property type="match status" value="1"/>
</dbReference>
<dbReference type="InterPro" id="IPR053905">
    <property type="entry name" value="EF-G-like_DII"/>
</dbReference>
<dbReference type="InterPro" id="IPR041095">
    <property type="entry name" value="EFG_II"/>
</dbReference>
<dbReference type="InterPro" id="IPR009022">
    <property type="entry name" value="EFG_III"/>
</dbReference>
<dbReference type="InterPro" id="IPR035647">
    <property type="entry name" value="EFG_III/V"/>
</dbReference>
<dbReference type="InterPro" id="IPR047872">
    <property type="entry name" value="EFG_IV"/>
</dbReference>
<dbReference type="InterPro" id="IPR035649">
    <property type="entry name" value="EFG_V"/>
</dbReference>
<dbReference type="InterPro" id="IPR000640">
    <property type="entry name" value="EFG_V-like"/>
</dbReference>
<dbReference type="InterPro" id="IPR031157">
    <property type="entry name" value="G_TR_CS"/>
</dbReference>
<dbReference type="InterPro" id="IPR027417">
    <property type="entry name" value="P-loop_NTPase"/>
</dbReference>
<dbReference type="InterPro" id="IPR020568">
    <property type="entry name" value="Ribosomal_Su5_D2-typ_SF"/>
</dbReference>
<dbReference type="InterPro" id="IPR014721">
    <property type="entry name" value="Ribsml_uS5_D2-typ_fold_subgr"/>
</dbReference>
<dbReference type="InterPro" id="IPR005225">
    <property type="entry name" value="Small_GTP-bd"/>
</dbReference>
<dbReference type="InterPro" id="IPR000795">
    <property type="entry name" value="T_Tr_GTP-bd_dom"/>
</dbReference>
<dbReference type="InterPro" id="IPR009000">
    <property type="entry name" value="Transl_B-barrel_sf"/>
</dbReference>
<dbReference type="InterPro" id="IPR004540">
    <property type="entry name" value="Transl_elong_EFG/EF2"/>
</dbReference>
<dbReference type="InterPro" id="IPR005517">
    <property type="entry name" value="Transl_elong_EFG/EF2_IV"/>
</dbReference>
<dbReference type="NCBIfam" id="TIGR00484">
    <property type="entry name" value="EF-G"/>
    <property type="match status" value="1"/>
</dbReference>
<dbReference type="NCBIfam" id="NF009379">
    <property type="entry name" value="PRK12740.1-3"/>
    <property type="match status" value="1"/>
</dbReference>
<dbReference type="NCBIfam" id="NF009381">
    <property type="entry name" value="PRK12740.1-5"/>
    <property type="match status" value="1"/>
</dbReference>
<dbReference type="NCBIfam" id="TIGR00231">
    <property type="entry name" value="small_GTP"/>
    <property type="match status" value="1"/>
</dbReference>
<dbReference type="PANTHER" id="PTHR43261:SF1">
    <property type="entry name" value="RIBOSOME-RELEASING FACTOR 2, MITOCHONDRIAL"/>
    <property type="match status" value="1"/>
</dbReference>
<dbReference type="PANTHER" id="PTHR43261">
    <property type="entry name" value="TRANSLATION ELONGATION FACTOR G-RELATED"/>
    <property type="match status" value="1"/>
</dbReference>
<dbReference type="Pfam" id="PF22042">
    <property type="entry name" value="EF-G_D2"/>
    <property type="match status" value="1"/>
</dbReference>
<dbReference type="Pfam" id="PF00679">
    <property type="entry name" value="EFG_C"/>
    <property type="match status" value="1"/>
</dbReference>
<dbReference type="Pfam" id="PF14492">
    <property type="entry name" value="EFG_III"/>
    <property type="match status" value="1"/>
</dbReference>
<dbReference type="Pfam" id="PF03764">
    <property type="entry name" value="EFG_IV"/>
    <property type="match status" value="1"/>
</dbReference>
<dbReference type="Pfam" id="PF00009">
    <property type="entry name" value="GTP_EFTU"/>
    <property type="match status" value="1"/>
</dbReference>
<dbReference type="PRINTS" id="PR00315">
    <property type="entry name" value="ELONGATNFCT"/>
</dbReference>
<dbReference type="SMART" id="SM00838">
    <property type="entry name" value="EFG_C"/>
    <property type="match status" value="1"/>
</dbReference>
<dbReference type="SMART" id="SM00889">
    <property type="entry name" value="EFG_IV"/>
    <property type="match status" value="1"/>
</dbReference>
<dbReference type="SUPFAM" id="SSF54980">
    <property type="entry name" value="EF-G C-terminal domain-like"/>
    <property type="match status" value="2"/>
</dbReference>
<dbReference type="SUPFAM" id="SSF52540">
    <property type="entry name" value="P-loop containing nucleoside triphosphate hydrolases"/>
    <property type="match status" value="1"/>
</dbReference>
<dbReference type="SUPFAM" id="SSF54211">
    <property type="entry name" value="Ribosomal protein S5 domain 2-like"/>
    <property type="match status" value="1"/>
</dbReference>
<dbReference type="SUPFAM" id="SSF50447">
    <property type="entry name" value="Translation proteins"/>
    <property type="match status" value="1"/>
</dbReference>
<dbReference type="PROSITE" id="PS00301">
    <property type="entry name" value="G_TR_1"/>
    <property type="match status" value="1"/>
</dbReference>
<dbReference type="PROSITE" id="PS51722">
    <property type="entry name" value="G_TR_2"/>
    <property type="match status" value="1"/>
</dbReference>
<proteinExistence type="inferred from homology"/>
<feature type="chain" id="PRO_1000091767" description="Elongation factor G">
    <location>
        <begin position="1"/>
        <end position="693"/>
    </location>
</feature>
<feature type="domain" description="tr-type G">
    <location>
        <begin position="8"/>
        <end position="282"/>
    </location>
</feature>
<feature type="binding site" evidence="1">
    <location>
        <begin position="17"/>
        <end position="24"/>
    </location>
    <ligand>
        <name>GTP</name>
        <dbReference type="ChEBI" id="CHEBI:37565"/>
    </ligand>
</feature>
<feature type="binding site" evidence="1">
    <location>
        <begin position="81"/>
        <end position="85"/>
    </location>
    <ligand>
        <name>GTP</name>
        <dbReference type="ChEBI" id="CHEBI:37565"/>
    </ligand>
</feature>
<feature type="binding site" evidence="1">
    <location>
        <begin position="135"/>
        <end position="138"/>
    </location>
    <ligand>
        <name>GTP</name>
        <dbReference type="ChEBI" id="CHEBI:37565"/>
    </ligand>
</feature>